<keyword id="KW-0030">Aminoacyl-tRNA synthetase</keyword>
<keyword id="KW-0067">ATP-binding</keyword>
<keyword id="KW-0963">Cytoplasm</keyword>
<keyword id="KW-0436">Ligase</keyword>
<keyword id="KW-0479">Metal-binding</keyword>
<keyword id="KW-0547">Nucleotide-binding</keyword>
<keyword id="KW-0648">Protein biosynthesis</keyword>
<keyword id="KW-1185">Reference proteome</keyword>
<keyword id="KW-0694">RNA-binding</keyword>
<keyword id="KW-0820">tRNA-binding</keyword>
<keyword id="KW-0862">Zinc</keyword>
<reference key="1">
    <citation type="journal article" date="2003" name="Nature">
        <title>Genome sequence of Bacillus cereus and comparative analysis with Bacillus anthracis.</title>
        <authorList>
            <person name="Ivanova N."/>
            <person name="Sorokin A."/>
            <person name="Anderson I."/>
            <person name="Galleron N."/>
            <person name="Candelon B."/>
            <person name="Kapatral V."/>
            <person name="Bhattacharyya A."/>
            <person name="Reznik G."/>
            <person name="Mikhailova N."/>
            <person name="Lapidus A."/>
            <person name="Chu L."/>
            <person name="Mazur M."/>
            <person name="Goltsman E."/>
            <person name="Larsen N."/>
            <person name="D'Souza M."/>
            <person name="Walunas T."/>
            <person name="Grechkin Y."/>
            <person name="Pusch G."/>
            <person name="Haselkorn R."/>
            <person name="Fonstein M."/>
            <person name="Ehrlich S.D."/>
            <person name="Overbeek R."/>
            <person name="Kyrpides N.C."/>
        </authorList>
    </citation>
    <scope>NUCLEOTIDE SEQUENCE [LARGE SCALE GENOMIC DNA]</scope>
    <source>
        <strain>ATCC 14579 / DSM 31 / CCUG 7414 / JCM 2152 / NBRC 15305 / NCIMB 9373 / NCTC 2599 / NRRL B-3711</strain>
    </source>
</reference>
<organism>
    <name type="scientific">Bacillus cereus (strain ATCC 14579 / DSM 31 / CCUG 7414 / JCM 2152 / NBRC 15305 / NCIMB 9373 / NCTC 2599 / NRRL B-3711)</name>
    <dbReference type="NCBI Taxonomy" id="226900"/>
    <lineage>
        <taxon>Bacteria</taxon>
        <taxon>Bacillati</taxon>
        <taxon>Bacillota</taxon>
        <taxon>Bacilli</taxon>
        <taxon>Bacillales</taxon>
        <taxon>Bacillaceae</taxon>
        <taxon>Bacillus</taxon>
        <taxon>Bacillus cereus group</taxon>
    </lineage>
</organism>
<evidence type="ECO:0000255" key="1">
    <source>
        <dbReference type="HAMAP-Rule" id="MF_00036"/>
    </source>
</evidence>
<sequence length="880" mass="97459">MKQLTGAQIRQMFLDFFQEKGHAVEPSASLVPHEDPSLLWINSGVATLKKYFDGRVIPQNPRITNAQKSIRTNDIENVGKTARHHTFFEMLGNFSIGDYFKEEAITWAWEFLTSDKWIGFDKELLSVTIHPEDEEAFTIWNEKMGVPKERIIRLEENFWDIGEGPSGPNTEIFYDRGEAYGNDFSDPELYPGGENERYLEVWNLVFSQFNHNPDGSYTPLPKKNIDTGMGLERMTSIVQDVPTNFDTDLFMPMIGATETISGEKYRNGDLEKDMAFKVIADHIRTVTFAVGDGALPSNEGRGYVLRRLLRRAVRYSKKLNINRPFMFELVPVVGEVMKDFYPEVLEKKDFIAKVVKNEEERFHETLHDGEAILAEVIAKAKEEKTTVISGVDAFRLYDTYGFPIELTEEYAEEAGMTVDHEGFENEMEKQRERARAARQDVDSMQVQGGVLGEIKVASEFVGYGTVATESNVVALVKNGEYTDSLQAGEEGQLILDVTPFYAESGGQIADRGYLLADGVKVLVKDVQKAPNGQNLHKVVVEEGTLTKDAAVKAIIDTKNRSSVVKNHTATHLLHQALKDVLGTHVNQAGSLVTSERLRFDFSHFGQVQADELEKIERMVNEKIWESIDVEISQKAIEEAKEMGAMALFGEKYGDVVRVVQVGDYSLELCGGCHVDNTASIGIFKIVAESGIGAGTRRIEAVTGKSAYELMNDQVGLLKEAAGKMKTNPKDILTRVDGLFAEVKQLQKENESLAAKLSNIEAGNLTDSVMTVDGVNVLAAKVNVADMNNLRTMMDDLKNKLESAVVVLASVNDDKVNILAGVTKDLISQGYHAGKLVKEVASRCGGGGGGRPDMAQAGGKNPAQVEEALAFVQEYVKSVSK</sequence>
<proteinExistence type="inferred from homology"/>
<name>SYA_BACCR</name>
<comment type="function">
    <text evidence="1">Catalyzes the attachment of alanine to tRNA(Ala) in a two-step reaction: alanine is first activated by ATP to form Ala-AMP and then transferred to the acceptor end of tRNA(Ala). Also edits incorrectly charged Ser-tRNA(Ala) and Gly-tRNA(Ala) via its editing domain.</text>
</comment>
<comment type="catalytic activity">
    <reaction evidence="1">
        <text>tRNA(Ala) + L-alanine + ATP = L-alanyl-tRNA(Ala) + AMP + diphosphate</text>
        <dbReference type="Rhea" id="RHEA:12540"/>
        <dbReference type="Rhea" id="RHEA-COMP:9657"/>
        <dbReference type="Rhea" id="RHEA-COMP:9923"/>
        <dbReference type="ChEBI" id="CHEBI:30616"/>
        <dbReference type="ChEBI" id="CHEBI:33019"/>
        <dbReference type="ChEBI" id="CHEBI:57972"/>
        <dbReference type="ChEBI" id="CHEBI:78442"/>
        <dbReference type="ChEBI" id="CHEBI:78497"/>
        <dbReference type="ChEBI" id="CHEBI:456215"/>
        <dbReference type="EC" id="6.1.1.7"/>
    </reaction>
</comment>
<comment type="cofactor">
    <cofactor evidence="1">
        <name>Zn(2+)</name>
        <dbReference type="ChEBI" id="CHEBI:29105"/>
    </cofactor>
    <text evidence="1">Binds 1 zinc ion per subunit.</text>
</comment>
<comment type="subcellular location">
    <subcellularLocation>
        <location evidence="1">Cytoplasm</location>
    </subcellularLocation>
</comment>
<comment type="domain">
    <text evidence="1">Consists of three domains; the N-terminal catalytic domain, the editing domain and the C-terminal C-Ala domain. The editing domain removes incorrectly charged amino acids, while the C-Ala domain, along with tRNA(Ala), serves as a bridge to cooperatively bring together the editing and aminoacylation centers thus stimulating deacylation of misacylated tRNAs.</text>
</comment>
<comment type="similarity">
    <text evidence="1">Belongs to the class-II aminoacyl-tRNA synthetase family.</text>
</comment>
<protein>
    <recommendedName>
        <fullName evidence="1">Alanine--tRNA ligase</fullName>
        <ecNumber evidence="1">6.1.1.7</ecNumber>
    </recommendedName>
    <alternativeName>
        <fullName evidence="1">Alanyl-tRNA synthetase</fullName>
        <shortName evidence="1">AlaRS</shortName>
    </alternativeName>
</protein>
<gene>
    <name evidence="1" type="primary">alaS</name>
    <name type="ordered locus">BC_4383</name>
</gene>
<accession>Q817Z0</accession>
<dbReference type="EC" id="6.1.1.7" evidence="1"/>
<dbReference type="EMBL" id="AE016877">
    <property type="protein sequence ID" value="AAP11296.1"/>
    <property type="molecule type" value="Genomic_DNA"/>
</dbReference>
<dbReference type="RefSeq" id="NP_834095.1">
    <property type="nucleotide sequence ID" value="NC_004722.1"/>
</dbReference>
<dbReference type="RefSeq" id="WP_000811825.1">
    <property type="nucleotide sequence ID" value="NZ_CP138336.1"/>
</dbReference>
<dbReference type="SMR" id="Q817Z0"/>
<dbReference type="STRING" id="226900.BC_4383"/>
<dbReference type="KEGG" id="bce:BC4383"/>
<dbReference type="PATRIC" id="fig|226900.8.peg.4533"/>
<dbReference type="HOGENOM" id="CLU_004485_1_1_9"/>
<dbReference type="OrthoDB" id="9803884at2"/>
<dbReference type="Proteomes" id="UP000001417">
    <property type="component" value="Chromosome"/>
</dbReference>
<dbReference type="GO" id="GO:0005829">
    <property type="term" value="C:cytosol"/>
    <property type="evidence" value="ECO:0000318"/>
    <property type="project" value="GO_Central"/>
</dbReference>
<dbReference type="GO" id="GO:0004813">
    <property type="term" value="F:alanine-tRNA ligase activity"/>
    <property type="evidence" value="ECO:0000318"/>
    <property type="project" value="GO_Central"/>
</dbReference>
<dbReference type="GO" id="GO:0002161">
    <property type="term" value="F:aminoacyl-tRNA deacylase activity"/>
    <property type="evidence" value="ECO:0000318"/>
    <property type="project" value="GO_Central"/>
</dbReference>
<dbReference type="GO" id="GO:0005524">
    <property type="term" value="F:ATP binding"/>
    <property type="evidence" value="ECO:0007669"/>
    <property type="project" value="UniProtKB-UniRule"/>
</dbReference>
<dbReference type="GO" id="GO:0140096">
    <property type="term" value="F:catalytic activity, acting on a protein"/>
    <property type="evidence" value="ECO:0007669"/>
    <property type="project" value="UniProtKB-ARBA"/>
</dbReference>
<dbReference type="GO" id="GO:0016740">
    <property type="term" value="F:transferase activity"/>
    <property type="evidence" value="ECO:0007669"/>
    <property type="project" value="UniProtKB-ARBA"/>
</dbReference>
<dbReference type="GO" id="GO:0000049">
    <property type="term" value="F:tRNA binding"/>
    <property type="evidence" value="ECO:0007669"/>
    <property type="project" value="UniProtKB-KW"/>
</dbReference>
<dbReference type="GO" id="GO:0008270">
    <property type="term" value="F:zinc ion binding"/>
    <property type="evidence" value="ECO:0007669"/>
    <property type="project" value="UniProtKB-UniRule"/>
</dbReference>
<dbReference type="GO" id="GO:0006419">
    <property type="term" value="P:alanyl-tRNA aminoacylation"/>
    <property type="evidence" value="ECO:0000318"/>
    <property type="project" value="GO_Central"/>
</dbReference>
<dbReference type="CDD" id="cd00673">
    <property type="entry name" value="AlaRS_core"/>
    <property type="match status" value="1"/>
</dbReference>
<dbReference type="FunFam" id="2.40.30.130:FF:000001">
    <property type="entry name" value="Alanine--tRNA ligase"/>
    <property type="match status" value="1"/>
</dbReference>
<dbReference type="FunFam" id="3.10.310.40:FF:000001">
    <property type="entry name" value="Alanine--tRNA ligase"/>
    <property type="match status" value="1"/>
</dbReference>
<dbReference type="FunFam" id="3.30.54.20:FF:000001">
    <property type="entry name" value="Alanine--tRNA ligase"/>
    <property type="match status" value="1"/>
</dbReference>
<dbReference type="FunFam" id="3.30.930.10:FF:000046">
    <property type="entry name" value="Alanine--tRNA ligase"/>
    <property type="match status" value="1"/>
</dbReference>
<dbReference type="FunFam" id="3.30.980.10:FF:000004">
    <property type="entry name" value="Alanine--tRNA ligase, cytoplasmic"/>
    <property type="match status" value="1"/>
</dbReference>
<dbReference type="Gene3D" id="2.40.30.130">
    <property type="match status" value="1"/>
</dbReference>
<dbReference type="Gene3D" id="3.10.310.40">
    <property type="match status" value="1"/>
</dbReference>
<dbReference type="Gene3D" id="3.30.54.20">
    <property type="match status" value="1"/>
</dbReference>
<dbReference type="Gene3D" id="6.10.250.550">
    <property type="match status" value="1"/>
</dbReference>
<dbReference type="Gene3D" id="3.30.930.10">
    <property type="entry name" value="Bira Bifunctional Protein, Domain 2"/>
    <property type="match status" value="1"/>
</dbReference>
<dbReference type="Gene3D" id="3.30.980.10">
    <property type="entry name" value="Threonyl-trna Synthetase, Chain A, domain 2"/>
    <property type="match status" value="1"/>
</dbReference>
<dbReference type="HAMAP" id="MF_00036_B">
    <property type="entry name" value="Ala_tRNA_synth_B"/>
    <property type="match status" value="1"/>
</dbReference>
<dbReference type="InterPro" id="IPR045864">
    <property type="entry name" value="aa-tRNA-synth_II/BPL/LPL"/>
</dbReference>
<dbReference type="InterPro" id="IPR002318">
    <property type="entry name" value="Ala-tRNA-lgiase_IIc"/>
</dbReference>
<dbReference type="InterPro" id="IPR018162">
    <property type="entry name" value="Ala-tRNA-ligase_IIc_anticod-bd"/>
</dbReference>
<dbReference type="InterPro" id="IPR018165">
    <property type="entry name" value="Ala-tRNA-synth_IIc_core"/>
</dbReference>
<dbReference type="InterPro" id="IPR018164">
    <property type="entry name" value="Ala-tRNA-synth_IIc_N"/>
</dbReference>
<dbReference type="InterPro" id="IPR050058">
    <property type="entry name" value="Ala-tRNA_ligase"/>
</dbReference>
<dbReference type="InterPro" id="IPR023033">
    <property type="entry name" value="Ala_tRNA_ligase_euk/bac"/>
</dbReference>
<dbReference type="InterPro" id="IPR003156">
    <property type="entry name" value="DHHA1_dom"/>
</dbReference>
<dbReference type="InterPro" id="IPR018163">
    <property type="entry name" value="Thr/Ala-tRNA-synth_IIc_edit"/>
</dbReference>
<dbReference type="InterPro" id="IPR009000">
    <property type="entry name" value="Transl_B-barrel_sf"/>
</dbReference>
<dbReference type="InterPro" id="IPR012947">
    <property type="entry name" value="tRNA_SAD"/>
</dbReference>
<dbReference type="NCBIfam" id="TIGR00344">
    <property type="entry name" value="alaS"/>
    <property type="match status" value="1"/>
</dbReference>
<dbReference type="PANTHER" id="PTHR11777:SF9">
    <property type="entry name" value="ALANINE--TRNA LIGASE, CYTOPLASMIC"/>
    <property type="match status" value="1"/>
</dbReference>
<dbReference type="PANTHER" id="PTHR11777">
    <property type="entry name" value="ALANYL-TRNA SYNTHETASE"/>
    <property type="match status" value="1"/>
</dbReference>
<dbReference type="Pfam" id="PF02272">
    <property type="entry name" value="DHHA1"/>
    <property type="match status" value="1"/>
</dbReference>
<dbReference type="Pfam" id="PF01411">
    <property type="entry name" value="tRNA-synt_2c"/>
    <property type="match status" value="1"/>
</dbReference>
<dbReference type="Pfam" id="PF07973">
    <property type="entry name" value="tRNA_SAD"/>
    <property type="match status" value="1"/>
</dbReference>
<dbReference type="PRINTS" id="PR00980">
    <property type="entry name" value="TRNASYNTHALA"/>
</dbReference>
<dbReference type="SMART" id="SM00863">
    <property type="entry name" value="tRNA_SAD"/>
    <property type="match status" value="1"/>
</dbReference>
<dbReference type="SUPFAM" id="SSF55681">
    <property type="entry name" value="Class II aaRS and biotin synthetases"/>
    <property type="match status" value="1"/>
</dbReference>
<dbReference type="SUPFAM" id="SSF101353">
    <property type="entry name" value="Putative anticodon-binding domain of alanyl-tRNA synthetase (AlaRS)"/>
    <property type="match status" value="1"/>
</dbReference>
<dbReference type="SUPFAM" id="SSF55186">
    <property type="entry name" value="ThrRS/AlaRS common domain"/>
    <property type="match status" value="1"/>
</dbReference>
<dbReference type="SUPFAM" id="SSF50447">
    <property type="entry name" value="Translation proteins"/>
    <property type="match status" value="1"/>
</dbReference>
<dbReference type="PROSITE" id="PS50860">
    <property type="entry name" value="AA_TRNA_LIGASE_II_ALA"/>
    <property type="match status" value="1"/>
</dbReference>
<feature type="chain" id="PRO_0000075052" description="Alanine--tRNA ligase">
    <location>
        <begin position="1"/>
        <end position="880"/>
    </location>
</feature>
<feature type="binding site" evidence="1">
    <location>
        <position position="567"/>
    </location>
    <ligand>
        <name>Zn(2+)</name>
        <dbReference type="ChEBI" id="CHEBI:29105"/>
    </ligand>
</feature>
<feature type="binding site" evidence="1">
    <location>
        <position position="571"/>
    </location>
    <ligand>
        <name>Zn(2+)</name>
        <dbReference type="ChEBI" id="CHEBI:29105"/>
    </ligand>
</feature>
<feature type="binding site" evidence="1">
    <location>
        <position position="669"/>
    </location>
    <ligand>
        <name>Zn(2+)</name>
        <dbReference type="ChEBI" id="CHEBI:29105"/>
    </ligand>
</feature>
<feature type="binding site" evidence="1">
    <location>
        <position position="673"/>
    </location>
    <ligand>
        <name>Zn(2+)</name>
        <dbReference type="ChEBI" id="CHEBI:29105"/>
    </ligand>
</feature>